<dbReference type="EC" id="6.3.2.2" evidence="1"/>
<dbReference type="EMBL" id="CP000653">
    <property type="protein sequence ID" value="ABP61832.1"/>
    <property type="molecule type" value="Genomic_DNA"/>
</dbReference>
<dbReference type="RefSeq" id="WP_015960162.1">
    <property type="nucleotide sequence ID" value="NC_009436.1"/>
</dbReference>
<dbReference type="SMR" id="A4WDQ2"/>
<dbReference type="STRING" id="399742.Ent638_3168"/>
<dbReference type="KEGG" id="ent:Ent638_3168"/>
<dbReference type="eggNOG" id="COG2918">
    <property type="taxonomic scope" value="Bacteria"/>
</dbReference>
<dbReference type="HOGENOM" id="CLU_020728_3_0_6"/>
<dbReference type="OrthoDB" id="9803907at2"/>
<dbReference type="UniPathway" id="UPA00142">
    <property type="reaction ID" value="UER00209"/>
</dbReference>
<dbReference type="Proteomes" id="UP000000230">
    <property type="component" value="Chromosome"/>
</dbReference>
<dbReference type="GO" id="GO:0005829">
    <property type="term" value="C:cytosol"/>
    <property type="evidence" value="ECO:0007669"/>
    <property type="project" value="TreeGrafter"/>
</dbReference>
<dbReference type="GO" id="GO:0005524">
    <property type="term" value="F:ATP binding"/>
    <property type="evidence" value="ECO:0007669"/>
    <property type="project" value="UniProtKB-KW"/>
</dbReference>
<dbReference type="GO" id="GO:0004357">
    <property type="term" value="F:glutamate-cysteine ligase activity"/>
    <property type="evidence" value="ECO:0007669"/>
    <property type="project" value="UniProtKB-UniRule"/>
</dbReference>
<dbReference type="GO" id="GO:0046872">
    <property type="term" value="F:metal ion binding"/>
    <property type="evidence" value="ECO:0007669"/>
    <property type="project" value="TreeGrafter"/>
</dbReference>
<dbReference type="GO" id="GO:0006750">
    <property type="term" value="P:glutathione biosynthetic process"/>
    <property type="evidence" value="ECO:0007669"/>
    <property type="project" value="UniProtKB-UniRule"/>
</dbReference>
<dbReference type="FunFam" id="3.30.590.20:FF:000001">
    <property type="entry name" value="Glutamate--cysteine ligase"/>
    <property type="match status" value="1"/>
</dbReference>
<dbReference type="Gene3D" id="3.30.590.20">
    <property type="match status" value="1"/>
</dbReference>
<dbReference type="HAMAP" id="MF_00578">
    <property type="entry name" value="Glu_cys_ligase"/>
    <property type="match status" value="1"/>
</dbReference>
<dbReference type="InterPro" id="IPR014746">
    <property type="entry name" value="Gln_synth/guanido_kin_cat_dom"/>
</dbReference>
<dbReference type="InterPro" id="IPR007370">
    <property type="entry name" value="Glu_cys_ligase"/>
</dbReference>
<dbReference type="InterPro" id="IPR006334">
    <property type="entry name" value="Glut_cys_ligase"/>
</dbReference>
<dbReference type="NCBIfam" id="TIGR01434">
    <property type="entry name" value="glu_cys_ligase"/>
    <property type="match status" value="1"/>
</dbReference>
<dbReference type="PANTHER" id="PTHR38761">
    <property type="entry name" value="GLUTAMATE--CYSTEINE LIGASE"/>
    <property type="match status" value="1"/>
</dbReference>
<dbReference type="PANTHER" id="PTHR38761:SF1">
    <property type="entry name" value="GLUTAMATE--CYSTEINE LIGASE"/>
    <property type="match status" value="1"/>
</dbReference>
<dbReference type="Pfam" id="PF04262">
    <property type="entry name" value="Glu_cys_ligase"/>
    <property type="match status" value="1"/>
</dbReference>
<dbReference type="SUPFAM" id="SSF55931">
    <property type="entry name" value="Glutamine synthetase/guanido kinase"/>
    <property type="match status" value="1"/>
</dbReference>
<evidence type="ECO:0000255" key="1">
    <source>
        <dbReference type="HAMAP-Rule" id="MF_00578"/>
    </source>
</evidence>
<gene>
    <name evidence="1" type="primary">gshA</name>
    <name type="ordered locus">Ent638_3168</name>
</gene>
<keyword id="KW-0067">ATP-binding</keyword>
<keyword id="KW-0317">Glutathione biosynthesis</keyword>
<keyword id="KW-0436">Ligase</keyword>
<keyword id="KW-0547">Nucleotide-binding</keyword>
<reference key="1">
    <citation type="journal article" date="2010" name="PLoS Genet.">
        <title>Genome sequence of the plant growth promoting endophytic bacterium Enterobacter sp. 638.</title>
        <authorList>
            <person name="Taghavi S."/>
            <person name="van der Lelie D."/>
            <person name="Hoffman A."/>
            <person name="Zhang Y.B."/>
            <person name="Walla M.D."/>
            <person name="Vangronsveld J."/>
            <person name="Newman L."/>
            <person name="Monchy S."/>
        </authorList>
    </citation>
    <scope>NUCLEOTIDE SEQUENCE [LARGE SCALE GENOMIC DNA]</scope>
    <source>
        <strain>638</strain>
    </source>
</reference>
<name>GSH1_ENT38</name>
<proteinExistence type="inferred from homology"/>
<protein>
    <recommendedName>
        <fullName evidence="1">Glutamate--cysteine ligase</fullName>
        <ecNumber evidence="1">6.3.2.2</ecNumber>
    </recommendedName>
    <alternativeName>
        <fullName evidence="1">Gamma-ECS</fullName>
        <shortName evidence="1">GCS</shortName>
    </alternativeName>
    <alternativeName>
        <fullName evidence="1">Gamma-glutamylcysteine synthetase</fullName>
    </alternativeName>
</protein>
<comment type="catalytic activity">
    <reaction evidence="1">
        <text>L-cysteine + L-glutamate + ATP = gamma-L-glutamyl-L-cysteine + ADP + phosphate + H(+)</text>
        <dbReference type="Rhea" id="RHEA:13285"/>
        <dbReference type="ChEBI" id="CHEBI:15378"/>
        <dbReference type="ChEBI" id="CHEBI:29985"/>
        <dbReference type="ChEBI" id="CHEBI:30616"/>
        <dbReference type="ChEBI" id="CHEBI:35235"/>
        <dbReference type="ChEBI" id="CHEBI:43474"/>
        <dbReference type="ChEBI" id="CHEBI:58173"/>
        <dbReference type="ChEBI" id="CHEBI:456216"/>
        <dbReference type="EC" id="6.3.2.2"/>
    </reaction>
</comment>
<comment type="pathway">
    <text evidence="1">Sulfur metabolism; glutathione biosynthesis; glutathione from L-cysteine and L-glutamate: step 1/2.</text>
</comment>
<comment type="similarity">
    <text evidence="1">Belongs to the glutamate--cysteine ligase type 1 family. Type 1 subfamily.</text>
</comment>
<organism>
    <name type="scientific">Enterobacter sp. (strain 638)</name>
    <dbReference type="NCBI Taxonomy" id="399742"/>
    <lineage>
        <taxon>Bacteria</taxon>
        <taxon>Pseudomonadati</taxon>
        <taxon>Pseudomonadota</taxon>
        <taxon>Gammaproteobacteria</taxon>
        <taxon>Enterobacterales</taxon>
        <taxon>Enterobacteriaceae</taxon>
        <taxon>Enterobacter</taxon>
    </lineage>
</organism>
<accession>A4WDQ2</accession>
<feature type="chain" id="PRO_1000061182" description="Glutamate--cysteine ligase">
    <location>
        <begin position="1"/>
        <end position="514"/>
    </location>
</feature>
<sequence>MIPDVSQALAWLEKHPQALKGIQRGLERETLRVNADGSLATTGHPESLGSALTHKWITTDFAEALLEFITPVDGDIDHMLTLMRDVHRYTARQLGDERMWPLSMPCYIEQGQDIELAQYGTSNIGRLKTLYREGLKNRYGALMQTISGVHYNFSLPMAFWQAKCGETDKEAISAGYFRLIRNYYRFGWVIPYLFGASPAICSSFLQGKPTTLPFEKTDCGMYYLPYATSLRLSDLGYTNKSQSNLGITFNDLHEYVAGLKRAIKTPSEEYETIGLEKDGKRLQINSNVLQIENELYAPIRPKRVTRSGEAPSDALERGGIEYIEVRSLDINPFSPIGVDEQQIRFLDLFMVWCVLADAPEMSSDELLCTRTNWNRVILEGRKPGLTLGIGCETAQFPLAKVGKDLFRDLKRVAQTMDSLYGGEEYQKVCDQLVESFDNPELTFSARILRSMIDQGIGGTGRTLAAQYRDMLQQEPLEVLSEEDFVAEREASIARQREVEAGDTESFEAFLAKHA</sequence>